<organism>
    <name type="scientific">Salmonella schwarzengrund (strain CVM19633)</name>
    <dbReference type="NCBI Taxonomy" id="439843"/>
    <lineage>
        <taxon>Bacteria</taxon>
        <taxon>Pseudomonadati</taxon>
        <taxon>Pseudomonadota</taxon>
        <taxon>Gammaproteobacteria</taxon>
        <taxon>Enterobacterales</taxon>
        <taxon>Enterobacteriaceae</taxon>
        <taxon>Salmonella</taxon>
    </lineage>
</organism>
<reference key="1">
    <citation type="journal article" date="2011" name="J. Bacteriol.">
        <title>Comparative genomics of 28 Salmonella enterica isolates: evidence for CRISPR-mediated adaptive sublineage evolution.</title>
        <authorList>
            <person name="Fricke W.F."/>
            <person name="Mammel M.K."/>
            <person name="McDermott P.F."/>
            <person name="Tartera C."/>
            <person name="White D.G."/>
            <person name="Leclerc J.E."/>
            <person name="Ravel J."/>
            <person name="Cebula T.A."/>
        </authorList>
    </citation>
    <scope>NUCLEOTIDE SEQUENCE [LARGE SCALE GENOMIC DNA]</scope>
    <source>
        <strain>CVM19633</strain>
    </source>
</reference>
<proteinExistence type="inferred from homology"/>
<gene>
    <name evidence="1" type="primary">rsxE</name>
    <name type="ordered locus">SeSA_A1552</name>
</gene>
<feature type="chain" id="PRO_1000125865" description="Ion-translocating oxidoreductase complex subunit E">
    <location>
        <begin position="1"/>
        <end position="230"/>
    </location>
</feature>
<feature type="transmembrane region" description="Helical" evidence="1">
    <location>
        <begin position="18"/>
        <end position="38"/>
    </location>
</feature>
<feature type="transmembrane region" description="Helical" evidence="1">
    <location>
        <begin position="39"/>
        <end position="59"/>
    </location>
</feature>
<feature type="transmembrane region" description="Helical" evidence="1">
    <location>
        <begin position="63"/>
        <end position="83"/>
    </location>
</feature>
<feature type="transmembrane region" description="Helical" evidence="1">
    <location>
        <begin position="86"/>
        <end position="106"/>
    </location>
</feature>
<feature type="transmembrane region" description="Helical" evidence="1">
    <location>
        <begin position="125"/>
        <end position="145"/>
    </location>
</feature>
<feature type="transmembrane region" description="Helical" evidence="1">
    <location>
        <begin position="182"/>
        <end position="202"/>
    </location>
</feature>
<evidence type="ECO:0000255" key="1">
    <source>
        <dbReference type="HAMAP-Rule" id="MF_00478"/>
    </source>
</evidence>
<sequence length="230" mass="24318">MSEIKDIVVQGLWKNNSALVQLLGLCPLLAVTSTATNALGLGLATTLVLTLTNLTVSALRRWTPAEIRIPIYVMIIASVVSAVQMLINAYAFGLYQSLGIFIPLIVTNCIVVGRAEAFAAKKGPWLSALDGFSIGMGATGAMFVLGSLREILGNGTLFDGADSLLGGWAKVLRVEIFHTDSPFLLAMLPPGAFIGLGLMLAVKYLIDEKMKKRRAETAPSAVPAGETGKV</sequence>
<dbReference type="EC" id="7.-.-.-" evidence="1"/>
<dbReference type="EMBL" id="CP001127">
    <property type="protein sequence ID" value="ACF90458.1"/>
    <property type="molecule type" value="Genomic_DNA"/>
</dbReference>
<dbReference type="RefSeq" id="WP_001289628.1">
    <property type="nucleotide sequence ID" value="NC_011094.1"/>
</dbReference>
<dbReference type="SMR" id="B4TV14"/>
<dbReference type="KEGG" id="sew:SeSA_A1552"/>
<dbReference type="HOGENOM" id="CLU_046659_1_0_6"/>
<dbReference type="Proteomes" id="UP000001865">
    <property type="component" value="Chromosome"/>
</dbReference>
<dbReference type="GO" id="GO:0005886">
    <property type="term" value="C:plasma membrane"/>
    <property type="evidence" value="ECO:0007669"/>
    <property type="project" value="UniProtKB-SubCell"/>
</dbReference>
<dbReference type="GO" id="GO:0022900">
    <property type="term" value="P:electron transport chain"/>
    <property type="evidence" value="ECO:0007669"/>
    <property type="project" value="UniProtKB-UniRule"/>
</dbReference>
<dbReference type="HAMAP" id="MF_00478">
    <property type="entry name" value="RsxE_RnfE"/>
    <property type="match status" value="1"/>
</dbReference>
<dbReference type="InterPro" id="IPR003667">
    <property type="entry name" value="NqrDE/RnfAE"/>
</dbReference>
<dbReference type="InterPro" id="IPR010968">
    <property type="entry name" value="RnfE"/>
</dbReference>
<dbReference type="NCBIfam" id="NF009070">
    <property type="entry name" value="PRK12405.1"/>
    <property type="match status" value="1"/>
</dbReference>
<dbReference type="NCBIfam" id="TIGR01948">
    <property type="entry name" value="rnfE"/>
    <property type="match status" value="1"/>
</dbReference>
<dbReference type="PANTHER" id="PTHR30586">
    <property type="entry name" value="ELECTRON TRANSPORT COMPLEX PROTEIN RNFE"/>
    <property type="match status" value="1"/>
</dbReference>
<dbReference type="PANTHER" id="PTHR30586:SF0">
    <property type="entry name" value="ION-TRANSLOCATING OXIDOREDUCTASE COMPLEX SUBUNIT E"/>
    <property type="match status" value="1"/>
</dbReference>
<dbReference type="Pfam" id="PF02508">
    <property type="entry name" value="Rnf-Nqr"/>
    <property type="match status" value="1"/>
</dbReference>
<dbReference type="PIRSF" id="PIRSF006102">
    <property type="entry name" value="NQR_DE"/>
    <property type="match status" value="1"/>
</dbReference>
<protein>
    <recommendedName>
        <fullName evidence="1">Ion-translocating oxidoreductase complex subunit E</fullName>
        <ecNumber evidence="1">7.-.-.-</ecNumber>
    </recommendedName>
    <alternativeName>
        <fullName evidence="1">Rsx electron transport complex subunit E</fullName>
    </alternativeName>
</protein>
<name>RSXE_SALSV</name>
<keyword id="KW-0997">Cell inner membrane</keyword>
<keyword id="KW-1003">Cell membrane</keyword>
<keyword id="KW-0249">Electron transport</keyword>
<keyword id="KW-0472">Membrane</keyword>
<keyword id="KW-1278">Translocase</keyword>
<keyword id="KW-0812">Transmembrane</keyword>
<keyword id="KW-1133">Transmembrane helix</keyword>
<keyword id="KW-0813">Transport</keyword>
<accession>B4TV14</accession>
<comment type="function">
    <text evidence="1">Part of a membrane-bound complex that couples electron transfer with translocation of ions across the membrane. Required to maintain the reduced state of SoxR.</text>
</comment>
<comment type="subunit">
    <text evidence="1">The complex is composed of six subunits: RsxA, RsxB, RsxC, RsxD, RsxE and RsxG.</text>
</comment>
<comment type="subcellular location">
    <subcellularLocation>
        <location evidence="1">Cell inner membrane</location>
        <topology evidence="1">Multi-pass membrane protein</topology>
    </subcellularLocation>
</comment>
<comment type="similarity">
    <text evidence="1">Belongs to the NqrDE/RnfAE family.</text>
</comment>